<evidence type="ECO:0000255" key="1">
    <source>
        <dbReference type="HAMAP-Rule" id="MF_01364"/>
    </source>
</evidence>
<evidence type="ECO:0000305" key="2"/>
<reference key="1">
    <citation type="journal article" date="2009" name="Nat. Genet.">
        <title>Comparative genomic and phylogeographic analysis of Mycobacterium leprae.</title>
        <authorList>
            <person name="Monot M."/>
            <person name="Honore N."/>
            <person name="Garnier T."/>
            <person name="Zidane N."/>
            <person name="Sherafi D."/>
            <person name="Paniz-Mondolfi A."/>
            <person name="Matsuoka M."/>
            <person name="Taylor G.M."/>
            <person name="Donoghue H.D."/>
            <person name="Bouwman A."/>
            <person name="Mays S."/>
            <person name="Watson C."/>
            <person name="Lockwood D."/>
            <person name="Khamispour A."/>
            <person name="Dowlati Y."/>
            <person name="Jianping S."/>
            <person name="Rea T.H."/>
            <person name="Vera-Cabrera L."/>
            <person name="Stefani M.M."/>
            <person name="Banu S."/>
            <person name="Macdonald M."/>
            <person name="Sapkota B.R."/>
            <person name="Spencer J.S."/>
            <person name="Thomas J."/>
            <person name="Harshman K."/>
            <person name="Singh P."/>
            <person name="Busso P."/>
            <person name="Gattiker A."/>
            <person name="Rougemont J."/>
            <person name="Brennan P.J."/>
            <person name="Cole S.T."/>
        </authorList>
    </citation>
    <scope>NUCLEOTIDE SEQUENCE [LARGE SCALE GENOMIC DNA]</scope>
    <source>
        <strain>Br4923</strain>
    </source>
</reference>
<accession>B8ZSA6</accession>
<name>RS14Z_MYCLB</name>
<gene>
    <name evidence="1" type="primary">rpsZ</name>
    <name evidence="1" type="synonym">rpsN</name>
    <name type="ordered locus">MLBr01846</name>
</gene>
<comment type="function">
    <text evidence="1">Binds 16S rRNA, required for the assembly of 30S particles and may also be responsible for determining the conformation of the 16S rRNA at the A site.</text>
</comment>
<comment type="cofactor">
    <cofactor evidence="1">
        <name>Zn(2+)</name>
        <dbReference type="ChEBI" id="CHEBI:29105"/>
    </cofactor>
    <text evidence="1">Binds 1 zinc ion per subunit.</text>
</comment>
<comment type="subunit">
    <text evidence="1">Part of the 30S ribosomal subunit. Contacts proteins S3 and S10.</text>
</comment>
<comment type="similarity">
    <text evidence="1">Belongs to the universal ribosomal protein uS14 family. Zinc-binding uS14 subfamily.</text>
</comment>
<keyword id="KW-0479">Metal-binding</keyword>
<keyword id="KW-0687">Ribonucleoprotein</keyword>
<keyword id="KW-0689">Ribosomal protein</keyword>
<keyword id="KW-0694">RNA-binding</keyword>
<keyword id="KW-0699">rRNA-binding</keyword>
<keyword id="KW-0862">Zinc</keyword>
<organism>
    <name type="scientific">Mycobacterium leprae (strain Br4923)</name>
    <dbReference type="NCBI Taxonomy" id="561304"/>
    <lineage>
        <taxon>Bacteria</taxon>
        <taxon>Bacillati</taxon>
        <taxon>Actinomycetota</taxon>
        <taxon>Actinomycetes</taxon>
        <taxon>Mycobacteriales</taxon>
        <taxon>Mycobacteriaceae</taxon>
        <taxon>Mycobacterium</taxon>
    </lineage>
</organism>
<dbReference type="EMBL" id="FM211192">
    <property type="protein sequence ID" value="CAR71942.1"/>
    <property type="molecule type" value="Genomic_DNA"/>
</dbReference>
<dbReference type="SMR" id="B8ZSA6"/>
<dbReference type="KEGG" id="mlb:MLBr01846"/>
<dbReference type="HOGENOM" id="CLU_139869_3_0_11"/>
<dbReference type="Proteomes" id="UP000006900">
    <property type="component" value="Chromosome"/>
</dbReference>
<dbReference type="GO" id="GO:0005737">
    <property type="term" value="C:cytoplasm"/>
    <property type="evidence" value="ECO:0007669"/>
    <property type="project" value="UniProtKB-ARBA"/>
</dbReference>
<dbReference type="GO" id="GO:0015935">
    <property type="term" value="C:small ribosomal subunit"/>
    <property type="evidence" value="ECO:0007669"/>
    <property type="project" value="TreeGrafter"/>
</dbReference>
<dbReference type="GO" id="GO:0019843">
    <property type="term" value="F:rRNA binding"/>
    <property type="evidence" value="ECO:0007669"/>
    <property type="project" value="UniProtKB-UniRule"/>
</dbReference>
<dbReference type="GO" id="GO:0003735">
    <property type="term" value="F:structural constituent of ribosome"/>
    <property type="evidence" value="ECO:0007669"/>
    <property type="project" value="InterPro"/>
</dbReference>
<dbReference type="GO" id="GO:0008270">
    <property type="term" value="F:zinc ion binding"/>
    <property type="evidence" value="ECO:0007669"/>
    <property type="project" value="UniProtKB-UniRule"/>
</dbReference>
<dbReference type="GO" id="GO:0006412">
    <property type="term" value="P:translation"/>
    <property type="evidence" value="ECO:0007669"/>
    <property type="project" value="UniProtKB-UniRule"/>
</dbReference>
<dbReference type="FunFam" id="4.10.830.10:FF:000001">
    <property type="entry name" value="30S ribosomal protein S14 type Z"/>
    <property type="match status" value="1"/>
</dbReference>
<dbReference type="Gene3D" id="4.10.830.10">
    <property type="entry name" value="30s Ribosomal Protein S14, Chain N"/>
    <property type="match status" value="1"/>
</dbReference>
<dbReference type="HAMAP" id="MF_01364_B">
    <property type="entry name" value="Ribosomal_uS14_2_B"/>
    <property type="match status" value="1"/>
</dbReference>
<dbReference type="InterPro" id="IPR001209">
    <property type="entry name" value="Ribosomal_uS14"/>
</dbReference>
<dbReference type="InterPro" id="IPR023053">
    <property type="entry name" value="Ribosomal_uS14_bact"/>
</dbReference>
<dbReference type="InterPro" id="IPR018271">
    <property type="entry name" value="Ribosomal_uS14_CS"/>
</dbReference>
<dbReference type="InterPro" id="IPR043140">
    <property type="entry name" value="Ribosomal_uS14_sf"/>
</dbReference>
<dbReference type="NCBIfam" id="NF005974">
    <property type="entry name" value="PRK08061.1"/>
    <property type="match status" value="1"/>
</dbReference>
<dbReference type="PANTHER" id="PTHR19836">
    <property type="entry name" value="30S RIBOSOMAL PROTEIN S14"/>
    <property type="match status" value="1"/>
</dbReference>
<dbReference type="PANTHER" id="PTHR19836:SF19">
    <property type="entry name" value="SMALL RIBOSOMAL SUBUNIT PROTEIN US14M"/>
    <property type="match status" value="1"/>
</dbReference>
<dbReference type="Pfam" id="PF00253">
    <property type="entry name" value="Ribosomal_S14"/>
    <property type="match status" value="1"/>
</dbReference>
<dbReference type="SUPFAM" id="SSF57716">
    <property type="entry name" value="Glucocorticoid receptor-like (DNA-binding domain)"/>
    <property type="match status" value="1"/>
</dbReference>
<dbReference type="PROSITE" id="PS00527">
    <property type="entry name" value="RIBOSOMAL_S14"/>
    <property type="match status" value="1"/>
</dbReference>
<protein>
    <recommendedName>
        <fullName evidence="1">Small ribosomal subunit protein uS14</fullName>
    </recommendedName>
    <alternativeName>
        <fullName evidence="2">30S ribosomal protein S14 type Z</fullName>
    </alternativeName>
</protein>
<feature type="chain" id="PRO_1000166775" description="Small ribosomal subunit protein uS14">
    <location>
        <begin position="1"/>
        <end position="61"/>
    </location>
</feature>
<feature type="binding site" evidence="1">
    <location>
        <position position="24"/>
    </location>
    <ligand>
        <name>Zn(2+)</name>
        <dbReference type="ChEBI" id="CHEBI:29105"/>
    </ligand>
</feature>
<feature type="binding site" evidence="1">
    <location>
        <position position="27"/>
    </location>
    <ligand>
        <name>Zn(2+)</name>
        <dbReference type="ChEBI" id="CHEBI:29105"/>
    </ligand>
</feature>
<feature type="binding site" evidence="1">
    <location>
        <position position="40"/>
    </location>
    <ligand>
        <name>Zn(2+)</name>
        <dbReference type="ChEBI" id="CHEBI:29105"/>
    </ligand>
</feature>
<feature type="binding site" evidence="1">
    <location>
        <position position="43"/>
    </location>
    <ligand>
        <name>Zn(2+)</name>
        <dbReference type="ChEBI" id="CHEBI:29105"/>
    </ligand>
</feature>
<proteinExistence type="inferred from homology"/>
<sequence>MAKKALVNKAARKPKFTVRGYTRCSKCGRPRAVFRKFGLCRICLREMAHAGELPGVQKSSW</sequence>